<accession>Q2SYF5</accession>
<keyword id="KW-0963">Cytoplasm</keyword>
<keyword id="KW-0378">Hydrolase</keyword>
<reference key="1">
    <citation type="journal article" date="2005" name="BMC Genomics">
        <title>Bacterial genome adaptation to niches: divergence of the potential virulence genes in three Burkholderia species of different survival strategies.</title>
        <authorList>
            <person name="Kim H.S."/>
            <person name="Schell M.A."/>
            <person name="Yu Y."/>
            <person name="Ulrich R.L."/>
            <person name="Sarria S.H."/>
            <person name="Nierman W.C."/>
            <person name="DeShazer D."/>
        </authorList>
    </citation>
    <scope>NUCLEOTIDE SEQUENCE [LARGE SCALE GENOMIC DNA]</scope>
    <source>
        <strain>ATCC 700388 / DSM 13276 / CCUG 48851 / CIP 106301 / E264</strain>
    </source>
</reference>
<dbReference type="EC" id="3.5.1.5" evidence="1"/>
<dbReference type="EMBL" id="CP000086">
    <property type="protein sequence ID" value="ABC36372.1"/>
    <property type="molecule type" value="Genomic_DNA"/>
</dbReference>
<dbReference type="RefSeq" id="WP_009889615.1">
    <property type="nucleotide sequence ID" value="NZ_CP008785.1"/>
</dbReference>
<dbReference type="SMR" id="Q2SYF5"/>
<dbReference type="GeneID" id="45121239"/>
<dbReference type="KEGG" id="bte:BTH_I1498"/>
<dbReference type="HOGENOM" id="CLU_145825_1_0_4"/>
<dbReference type="UniPathway" id="UPA00258">
    <property type="reaction ID" value="UER00370"/>
</dbReference>
<dbReference type="Proteomes" id="UP000001930">
    <property type="component" value="Chromosome I"/>
</dbReference>
<dbReference type="GO" id="GO:0005737">
    <property type="term" value="C:cytoplasm"/>
    <property type="evidence" value="ECO:0007669"/>
    <property type="project" value="UniProtKB-SubCell"/>
</dbReference>
<dbReference type="GO" id="GO:0016151">
    <property type="term" value="F:nickel cation binding"/>
    <property type="evidence" value="ECO:0007669"/>
    <property type="project" value="InterPro"/>
</dbReference>
<dbReference type="GO" id="GO:0009039">
    <property type="term" value="F:urease activity"/>
    <property type="evidence" value="ECO:0007669"/>
    <property type="project" value="UniProtKB-UniRule"/>
</dbReference>
<dbReference type="GO" id="GO:0043419">
    <property type="term" value="P:urea catabolic process"/>
    <property type="evidence" value="ECO:0007669"/>
    <property type="project" value="UniProtKB-UniRule"/>
</dbReference>
<dbReference type="CDD" id="cd00390">
    <property type="entry name" value="Urease_gamma"/>
    <property type="match status" value="1"/>
</dbReference>
<dbReference type="Gene3D" id="3.30.280.10">
    <property type="entry name" value="Urease, gamma-like subunit"/>
    <property type="match status" value="1"/>
</dbReference>
<dbReference type="HAMAP" id="MF_00739">
    <property type="entry name" value="Urease_gamma"/>
    <property type="match status" value="1"/>
</dbReference>
<dbReference type="InterPro" id="IPR012010">
    <property type="entry name" value="Urease_gamma"/>
</dbReference>
<dbReference type="InterPro" id="IPR002026">
    <property type="entry name" value="Urease_gamma/gamma-beta_su"/>
</dbReference>
<dbReference type="InterPro" id="IPR036463">
    <property type="entry name" value="Urease_gamma_sf"/>
</dbReference>
<dbReference type="InterPro" id="IPR050069">
    <property type="entry name" value="Urease_subunit"/>
</dbReference>
<dbReference type="NCBIfam" id="NF009712">
    <property type="entry name" value="PRK13241.1"/>
    <property type="match status" value="1"/>
</dbReference>
<dbReference type="NCBIfam" id="TIGR00193">
    <property type="entry name" value="urease_gam"/>
    <property type="match status" value="1"/>
</dbReference>
<dbReference type="PANTHER" id="PTHR33569">
    <property type="entry name" value="UREASE"/>
    <property type="match status" value="1"/>
</dbReference>
<dbReference type="PANTHER" id="PTHR33569:SF1">
    <property type="entry name" value="UREASE"/>
    <property type="match status" value="1"/>
</dbReference>
<dbReference type="Pfam" id="PF00547">
    <property type="entry name" value="Urease_gamma"/>
    <property type="match status" value="1"/>
</dbReference>
<dbReference type="PIRSF" id="PIRSF001223">
    <property type="entry name" value="Urease_gamma"/>
    <property type="match status" value="1"/>
</dbReference>
<dbReference type="SUPFAM" id="SSF54111">
    <property type="entry name" value="Urease, gamma-subunit"/>
    <property type="match status" value="1"/>
</dbReference>
<gene>
    <name evidence="1" type="primary">ureA</name>
    <name type="ordered locus">BTH_I1498</name>
</gene>
<evidence type="ECO:0000255" key="1">
    <source>
        <dbReference type="HAMAP-Rule" id="MF_00739"/>
    </source>
</evidence>
<proteinExistence type="inferred from homology"/>
<comment type="catalytic activity">
    <reaction evidence="1">
        <text>urea + 2 H2O + H(+) = hydrogencarbonate + 2 NH4(+)</text>
        <dbReference type="Rhea" id="RHEA:20557"/>
        <dbReference type="ChEBI" id="CHEBI:15377"/>
        <dbReference type="ChEBI" id="CHEBI:15378"/>
        <dbReference type="ChEBI" id="CHEBI:16199"/>
        <dbReference type="ChEBI" id="CHEBI:17544"/>
        <dbReference type="ChEBI" id="CHEBI:28938"/>
        <dbReference type="EC" id="3.5.1.5"/>
    </reaction>
</comment>
<comment type="pathway">
    <text evidence="1">Nitrogen metabolism; urea degradation; CO(2) and NH(3) from urea (urease route): step 1/1.</text>
</comment>
<comment type="subunit">
    <text evidence="1">Heterotrimer of UreA (gamma), UreB (beta) and UreC (alpha) subunits. Three heterotrimers associate to form the active enzyme.</text>
</comment>
<comment type="subcellular location">
    <subcellularLocation>
        <location evidence="1">Cytoplasm</location>
    </subcellularLocation>
</comment>
<comment type="similarity">
    <text evidence="1">Belongs to the urease gamma subunit family.</text>
</comment>
<protein>
    <recommendedName>
        <fullName evidence="1">Urease subunit gamma</fullName>
        <ecNumber evidence="1">3.5.1.5</ecNumber>
    </recommendedName>
    <alternativeName>
        <fullName evidence="1">Urea amidohydrolase subunit gamma</fullName>
    </alternativeName>
</protein>
<name>URE3_BURTA</name>
<sequence>MKLTPREKDKLLIFTAALLAERRRARGLKLNYPETIAFITAALMEAARDGKTVAEVMHYGTTLLTRDDVMEGVPEMIPDIQVEATFPDGTKLVTVHHPIP</sequence>
<feature type="chain" id="PRO_0000234203" description="Urease subunit gamma">
    <location>
        <begin position="1"/>
        <end position="100"/>
    </location>
</feature>
<organism>
    <name type="scientific">Burkholderia thailandensis (strain ATCC 700388 / DSM 13276 / CCUG 48851 / CIP 106301 / E264)</name>
    <dbReference type="NCBI Taxonomy" id="271848"/>
    <lineage>
        <taxon>Bacteria</taxon>
        <taxon>Pseudomonadati</taxon>
        <taxon>Pseudomonadota</taxon>
        <taxon>Betaproteobacteria</taxon>
        <taxon>Burkholderiales</taxon>
        <taxon>Burkholderiaceae</taxon>
        <taxon>Burkholderia</taxon>
        <taxon>pseudomallei group</taxon>
    </lineage>
</organism>